<sequence>MSLKKRYRETIQPKLQKDLSLTNIHEVPKVLKVTVNRGLGEAAANAKSLEASVNELAQITGQKVVVTRAKKAIAGFKIRQGMPIGCAVTLRGDRMYAFLERLINLALPRIRDFRGVSPKSFDGRGNYTLGVREQIIFPEISFDKIDAIRGMDITIVTTARSDEEGRALLREMGMPFQSN</sequence>
<protein>
    <recommendedName>
        <fullName evidence="1">Large ribosomal subunit protein uL5</fullName>
    </recommendedName>
    <alternativeName>
        <fullName evidence="2">50S ribosomal protein L5</fullName>
    </alternativeName>
</protein>
<reference key="1">
    <citation type="submission" date="2005-07" db="EMBL/GenBank/DDBJ databases">
        <title>Complete sequence of Synechococcus sp. CC9605.</title>
        <authorList>
            <consortium name="US DOE Joint Genome Institute"/>
            <person name="Copeland A."/>
            <person name="Lucas S."/>
            <person name="Lapidus A."/>
            <person name="Barry K."/>
            <person name="Detter J.C."/>
            <person name="Glavina T."/>
            <person name="Hammon N."/>
            <person name="Israni S."/>
            <person name="Pitluck S."/>
            <person name="Schmutz J."/>
            <person name="Martinez M."/>
            <person name="Larimer F."/>
            <person name="Land M."/>
            <person name="Kyrpides N."/>
            <person name="Ivanova N."/>
            <person name="Richardson P."/>
        </authorList>
    </citation>
    <scope>NUCLEOTIDE SEQUENCE [LARGE SCALE GENOMIC DNA]</scope>
    <source>
        <strain>CC9605</strain>
    </source>
</reference>
<proteinExistence type="inferred from homology"/>
<feature type="chain" id="PRO_0000243074" description="Large ribosomal subunit protein uL5">
    <location>
        <begin position="1"/>
        <end position="179"/>
    </location>
</feature>
<organism>
    <name type="scientific">Synechococcus sp. (strain CC9605)</name>
    <dbReference type="NCBI Taxonomy" id="110662"/>
    <lineage>
        <taxon>Bacteria</taxon>
        <taxon>Bacillati</taxon>
        <taxon>Cyanobacteriota</taxon>
        <taxon>Cyanophyceae</taxon>
        <taxon>Synechococcales</taxon>
        <taxon>Synechococcaceae</taxon>
        <taxon>Synechococcus</taxon>
    </lineage>
</organism>
<gene>
    <name evidence="1" type="primary">rplE</name>
    <name evidence="1" type="synonym">rpl5</name>
    <name type="ordered locus">Syncc9605_0364</name>
</gene>
<name>RL5_SYNSC</name>
<accession>Q3AMP2</accession>
<dbReference type="EMBL" id="CP000110">
    <property type="protein sequence ID" value="ABB34140.1"/>
    <property type="molecule type" value="Genomic_DNA"/>
</dbReference>
<dbReference type="RefSeq" id="WP_011363383.1">
    <property type="nucleotide sequence ID" value="NC_007516.1"/>
</dbReference>
<dbReference type="SMR" id="Q3AMP2"/>
<dbReference type="STRING" id="110662.Syncc9605_0364"/>
<dbReference type="KEGG" id="syd:Syncc9605_0364"/>
<dbReference type="eggNOG" id="COG0094">
    <property type="taxonomic scope" value="Bacteria"/>
</dbReference>
<dbReference type="HOGENOM" id="CLU_061015_2_1_3"/>
<dbReference type="OrthoDB" id="9806626at2"/>
<dbReference type="GO" id="GO:1990904">
    <property type="term" value="C:ribonucleoprotein complex"/>
    <property type="evidence" value="ECO:0007669"/>
    <property type="project" value="UniProtKB-KW"/>
</dbReference>
<dbReference type="GO" id="GO:0005840">
    <property type="term" value="C:ribosome"/>
    <property type="evidence" value="ECO:0007669"/>
    <property type="project" value="UniProtKB-KW"/>
</dbReference>
<dbReference type="GO" id="GO:0019843">
    <property type="term" value="F:rRNA binding"/>
    <property type="evidence" value="ECO:0007669"/>
    <property type="project" value="UniProtKB-UniRule"/>
</dbReference>
<dbReference type="GO" id="GO:0003735">
    <property type="term" value="F:structural constituent of ribosome"/>
    <property type="evidence" value="ECO:0007669"/>
    <property type="project" value="InterPro"/>
</dbReference>
<dbReference type="GO" id="GO:0000049">
    <property type="term" value="F:tRNA binding"/>
    <property type="evidence" value="ECO:0007669"/>
    <property type="project" value="UniProtKB-UniRule"/>
</dbReference>
<dbReference type="GO" id="GO:0006412">
    <property type="term" value="P:translation"/>
    <property type="evidence" value="ECO:0007669"/>
    <property type="project" value="UniProtKB-UniRule"/>
</dbReference>
<dbReference type="FunFam" id="3.30.1440.10:FF:000001">
    <property type="entry name" value="50S ribosomal protein L5"/>
    <property type="match status" value="1"/>
</dbReference>
<dbReference type="Gene3D" id="3.30.1440.10">
    <property type="match status" value="1"/>
</dbReference>
<dbReference type="HAMAP" id="MF_01333_B">
    <property type="entry name" value="Ribosomal_uL5_B"/>
    <property type="match status" value="1"/>
</dbReference>
<dbReference type="InterPro" id="IPR002132">
    <property type="entry name" value="Ribosomal_uL5"/>
</dbReference>
<dbReference type="InterPro" id="IPR020930">
    <property type="entry name" value="Ribosomal_uL5_bac-type"/>
</dbReference>
<dbReference type="InterPro" id="IPR031309">
    <property type="entry name" value="Ribosomal_uL5_C"/>
</dbReference>
<dbReference type="InterPro" id="IPR020929">
    <property type="entry name" value="Ribosomal_uL5_CS"/>
</dbReference>
<dbReference type="InterPro" id="IPR022803">
    <property type="entry name" value="Ribosomal_uL5_dom_sf"/>
</dbReference>
<dbReference type="InterPro" id="IPR031310">
    <property type="entry name" value="Ribosomal_uL5_N"/>
</dbReference>
<dbReference type="NCBIfam" id="NF000585">
    <property type="entry name" value="PRK00010.1"/>
    <property type="match status" value="1"/>
</dbReference>
<dbReference type="PANTHER" id="PTHR11994">
    <property type="entry name" value="60S RIBOSOMAL PROTEIN L11-RELATED"/>
    <property type="match status" value="1"/>
</dbReference>
<dbReference type="Pfam" id="PF00281">
    <property type="entry name" value="Ribosomal_L5"/>
    <property type="match status" value="1"/>
</dbReference>
<dbReference type="Pfam" id="PF00673">
    <property type="entry name" value="Ribosomal_L5_C"/>
    <property type="match status" value="1"/>
</dbReference>
<dbReference type="PIRSF" id="PIRSF002161">
    <property type="entry name" value="Ribosomal_L5"/>
    <property type="match status" value="1"/>
</dbReference>
<dbReference type="SUPFAM" id="SSF55282">
    <property type="entry name" value="RL5-like"/>
    <property type="match status" value="1"/>
</dbReference>
<dbReference type="PROSITE" id="PS00358">
    <property type="entry name" value="RIBOSOMAL_L5"/>
    <property type="match status" value="1"/>
</dbReference>
<keyword id="KW-0687">Ribonucleoprotein</keyword>
<keyword id="KW-0689">Ribosomal protein</keyword>
<keyword id="KW-0694">RNA-binding</keyword>
<keyword id="KW-0699">rRNA-binding</keyword>
<keyword id="KW-0820">tRNA-binding</keyword>
<evidence type="ECO:0000255" key="1">
    <source>
        <dbReference type="HAMAP-Rule" id="MF_01333"/>
    </source>
</evidence>
<evidence type="ECO:0000305" key="2"/>
<comment type="function">
    <text evidence="1">This is one of the proteins that bind and probably mediate the attachment of the 5S RNA into the large ribosomal subunit, where it forms part of the central protuberance. In the 70S ribosome it contacts protein S13 of the 30S subunit (bridge B1b), connecting the 2 subunits; this bridge is implicated in subunit movement. Contacts the P site tRNA; the 5S rRNA and some of its associated proteins might help stabilize positioning of ribosome-bound tRNAs.</text>
</comment>
<comment type="subunit">
    <text evidence="1">Part of the 50S ribosomal subunit; part of the 5S rRNA/L5/L18/L25 subcomplex. Contacts the 5S rRNA and the P site tRNA. Forms a bridge to the 30S subunit in the 70S ribosome.</text>
</comment>
<comment type="similarity">
    <text evidence="1">Belongs to the universal ribosomal protein uL5 family.</text>
</comment>